<sequence>MQAEAIFTGTEMLLGQIVNTNAAFLGRELAAAGISLYRQVVVGDNLVRIREAIDNARRRADLIIVSGGLGPTEDDLSREALAAALGLPLVEDPAARENVTRYFAARRRPMTPNNLKQALLPAGARAMDNPHGTAAGVFLEHEGKVYALLPGPPREFEPMLVNQLLPRLEPYGARREIIFSRVLKIAGIGESGVEEAVKDLLHSDNPTLAPLAKPGEVTLRLTARAKSQEAARSLTALLEITIRERLGDYIFGTDDDTLESVTGAILAARHLTLAVAESCTGGLLAHRVTNIPGSSDYFLGGMVTYSNEAKVKFLGVEPEVLAARGAVSPEVAAAMARGVRQAVGTDIGIGITGIAGPGGGSEEKPVGLVYLGIDFRGQVEVRRELFMGQRENIKWQSTQSALYLLWRSLRAQCE</sequence>
<dbReference type="EMBL" id="CP000232">
    <property type="protein sequence ID" value="ABC19053.1"/>
    <property type="molecule type" value="Genomic_DNA"/>
</dbReference>
<dbReference type="RefSeq" id="YP_429596.1">
    <property type="nucleotide sequence ID" value="NC_007644.1"/>
</dbReference>
<dbReference type="SMR" id="Q2RKI6"/>
<dbReference type="STRING" id="264732.Moth_0735"/>
<dbReference type="EnsemblBacteria" id="ABC19053">
    <property type="protein sequence ID" value="ABC19053"/>
    <property type="gene ID" value="Moth_0735"/>
</dbReference>
<dbReference type="KEGG" id="mta:Moth_0735"/>
<dbReference type="PATRIC" id="fig|264732.11.peg.787"/>
<dbReference type="eggNOG" id="COG1058">
    <property type="taxonomic scope" value="Bacteria"/>
</dbReference>
<dbReference type="eggNOG" id="COG1546">
    <property type="taxonomic scope" value="Bacteria"/>
</dbReference>
<dbReference type="HOGENOM" id="CLU_030805_9_3_9"/>
<dbReference type="OrthoDB" id="9801454at2"/>
<dbReference type="CDD" id="cd00885">
    <property type="entry name" value="cinA"/>
    <property type="match status" value="1"/>
</dbReference>
<dbReference type="Gene3D" id="3.30.70.2860">
    <property type="match status" value="1"/>
</dbReference>
<dbReference type="Gene3D" id="3.90.950.20">
    <property type="entry name" value="CinA-like"/>
    <property type="match status" value="1"/>
</dbReference>
<dbReference type="Gene3D" id="3.40.980.10">
    <property type="entry name" value="MoaB/Mog-like domain"/>
    <property type="match status" value="1"/>
</dbReference>
<dbReference type="HAMAP" id="MF_00226_B">
    <property type="entry name" value="CinA_B"/>
    <property type="match status" value="1"/>
</dbReference>
<dbReference type="InterPro" id="IPR050101">
    <property type="entry name" value="CinA"/>
</dbReference>
<dbReference type="InterPro" id="IPR036653">
    <property type="entry name" value="CinA-like_C"/>
</dbReference>
<dbReference type="InterPro" id="IPR008136">
    <property type="entry name" value="CinA_C"/>
</dbReference>
<dbReference type="InterPro" id="IPR041424">
    <property type="entry name" value="CinA_KH"/>
</dbReference>
<dbReference type="InterPro" id="IPR008135">
    <property type="entry name" value="Competence-induced_CinA"/>
</dbReference>
<dbReference type="InterPro" id="IPR036425">
    <property type="entry name" value="MoaB/Mog-like_dom_sf"/>
</dbReference>
<dbReference type="InterPro" id="IPR001453">
    <property type="entry name" value="MoaB/Mog_dom"/>
</dbReference>
<dbReference type="NCBIfam" id="TIGR00200">
    <property type="entry name" value="cinA_nterm"/>
    <property type="match status" value="1"/>
</dbReference>
<dbReference type="NCBIfam" id="TIGR00199">
    <property type="entry name" value="PncC_domain"/>
    <property type="match status" value="1"/>
</dbReference>
<dbReference type="NCBIfam" id="NF001813">
    <property type="entry name" value="PRK00549.1"/>
    <property type="match status" value="1"/>
</dbReference>
<dbReference type="PANTHER" id="PTHR13939">
    <property type="entry name" value="NICOTINAMIDE-NUCLEOTIDE AMIDOHYDROLASE PNCC"/>
    <property type="match status" value="1"/>
</dbReference>
<dbReference type="PANTHER" id="PTHR13939:SF0">
    <property type="entry name" value="NMN AMIDOHYDROLASE-LIKE PROTEIN YFAY"/>
    <property type="match status" value="1"/>
</dbReference>
<dbReference type="Pfam" id="PF02464">
    <property type="entry name" value="CinA"/>
    <property type="match status" value="1"/>
</dbReference>
<dbReference type="Pfam" id="PF18146">
    <property type="entry name" value="CinA_KH"/>
    <property type="match status" value="1"/>
</dbReference>
<dbReference type="Pfam" id="PF00994">
    <property type="entry name" value="MoCF_biosynth"/>
    <property type="match status" value="1"/>
</dbReference>
<dbReference type="PIRSF" id="PIRSF006728">
    <property type="entry name" value="CinA"/>
    <property type="match status" value="1"/>
</dbReference>
<dbReference type="SMART" id="SM00852">
    <property type="entry name" value="MoCF_biosynth"/>
    <property type="match status" value="1"/>
</dbReference>
<dbReference type="SUPFAM" id="SSF142433">
    <property type="entry name" value="CinA-like"/>
    <property type="match status" value="1"/>
</dbReference>
<dbReference type="SUPFAM" id="SSF53218">
    <property type="entry name" value="Molybdenum cofactor biosynthesis proteins"/>
    <property type="match status" value="1"/>
</dbReference>
<organism>
    <name type="scientific">Moorella thermoacetica (strain ATCC 39073 / JCM 9320)</name>
    <dbReference type="NCBI Taxonomy" id="264732"/>
    <lineage>
        <taxon>Bacteria</taxon>
        <taxon>Bacillati</taxon>
        <taxon>Bacillota</taxon>
        <taxon>Clostridia</taxon>
        <taxon>Moorellales</taxon>
        <taxon>Moorellaceae</taxon>
        <taxon>Moorella</taxon>
    </lineage>
</organism>
<comment type="similarity">
    <text evidence="1">Belongs to the CinA family.</text>
</comment>
<proteinExistence type="inferred from homology"/>
<accession>Q2RKI6</accession>
<name>CINA_MOOTA</name>
<feature type="chain" id="PRO_1000058713" description="Putative competence-damage inducible protein">
    <location>
        <begin position="1"/>
        <end position="414"/>
    </location>
</feature>
<gene>
    <name evidence="1" type="primary">cinA</name>
    <name type="ordered locus">Moth_0735</name>
</gene>
<protein>
    <recommendedName>
        <fullName evidence="1">Putative competence-damage inducible protein</fullName>
    </recommendedName>
</protein>
<reference key="1">
    <citation type="journal article" date="2008" name="Environ. Microbiol.">
        <title>The complete genome sequence of Moorella thermoacetica (f. Clostridium thermoaceticum).</title>
        <authorList>
            <person name="Pierce E."/>
            <person name="Xie G."/>
            <person name="Barabote R.D."/>
            <person name="Saunders E."/>
            <person name="Han C.S."/>
            <person name="Detter J.C."/>
            <person name="Richardson P."/>
            <person name="Brettin T.S."/>
            <person name="Das A."/>
            <person name="Ljungdahl L.G."/>
            <person name="Ragsdale S.W."/>
        </authorList>
    </citation>
    <scope>NUCLEOTIDE SEQUENCE [LARGE SCALE GENOMIC DNA]</scope>
    <source>
        <strain>ATCC 39073 / JCM 9320</strain>
    </source>
</reference>
<evidence type="ECO:0000255" key="1">
    <source>
        <dbReference type="HAMAP-Rule" id="MF_00226"/>
    </source>
</evidence>